<reference key="1">
    <citation type="journal article" date="2001" name="Nature">
        <title>Complete genome sequence of a multiple drug resistant Salmonella enterica serovar Typhi CT18.</title>
        <authorList>
            <person name="Parkhill J."/>
            <person name="Dougan G."/>
            <person name="James K.D."/>
            <person name="Thomson N.R."/>
            <person name="Pickard D."/>
            <person name="Wain J."/>
            <person name="Churcher C.M."/>
            <person name="Mungall K.L."/>
            <person name="Bentley S.D."/>
            <person name="Holden M.T.G."/>
            <person name="Sebaihia M."/>
            <person name="Baker S."/>
            <person name="Basham D."/>
            <person name="Brooks K."/>
            <person name="Chillingworth T."/>
            <person name="Connerton P."/>
            <person name="Cronin A."/>
            <person name="Davis P."/>
            <person name="Davies R.M."/>
            <person name="Dowd L."/>
            <person name="White N."/>
            <person name="Farrar J."/>
            <person name="Feltwell T."/>
            <person name="Hamlin N."/>
            <person name="Haque A."/>
            <person name="Hien T.T."/>
            <person name="Holroyd S."/>
            <person name="Jagels K."/>
            <person name="Krogh A."/>
            <person name="Larsen T.S."/>
            <person name="Leather S."/>
            <person name="Moule S."/>
            <person name="O'Gaora P."/>
            <person name="Parry C."/>
            <person name="Quail M.A."/>
            <person name="Rutherford K.M."/>
            <person name="Simmonds M."/>
            <person name="Skelton J."/>
            <person name="Stevens K."/>
            <person name="Whitehead S."/>
            <person name="Barrell B.G."/>
        </authorList>
    </citation>
    <scope>NUCLEOTIDE SEQUENCE [LARGE SCALE GENOMIC DNA]</scope>
    <source>
        <strain>CT18</strain>
    </source>
</reference>
<reference key="2">
    <citation type="journal article" date="2003" name="J. Bacteriol.">
        <title>Comparative genomics of Salmonella enterica serovar Typhi strains Ty2 and CT18.</title>
        <authorList>
            <person name="Deng W."/>
            <person name="Liou S.-R."/>
            <person name="Plunkett G. III"/>
            <person name="Mayhew G.F."/>
            <person name="Rose D.J."/>
            <person name="Burland V."/>
            <person name="Kodoyianni V."/>
            <person name="Schwartz D.C."/>
            <person name="Blattner F.R."/>
        </authorList>
    </citation>
    <scope>NUCLEOTIDE SEQUENCE [LARGE SCALE GENOMIC DNA]</scope>
    <source>
        <strain>ATCC 700931 / Ty2</strain>
    </source>
</reference>
<name>PAT_SALTI</name>
<sequence>MNRLPSSASALACSAHALNLIEKRTLNHEEMKALNREVIDYFKEHVNPGFLEYRKSVTAGGDYGAVEWQAGSLNTLVDTQGQEFIDCLGGFGIFNVGHRNPVVVSAVQNQLAKQPLHSQELLDPLRAMLAKTLAALTPGKLKYSFFCNSGTESVEAALKLAKAYQSPRGKFTFIATSGAFHGKSLGALSATAKSTFRRPFMPLLPGFRHVPFGNIDAMSMAFSEGKKTGDEIAAVILEPIQGEGGVILPPQGYLTEVRKLCDEFGALMILDEVQTGMGRTGKMFACEHENVQPDILCLAKALGGGVMPIGATIATEEVFSVLFDNPFLHTTTFGGNPLACAAALATINVLLEQNLPAQAEQKGDTLLDGFRQLAREYPNLVHEARGKGMLMAIEFVDNETGYRFASEMFRQRVLVAGTLNNAKTIRIEPPLTLTIELCEQVLKSARNALAAMQVSVEEV</sequence>
<gene>
    <name evidence="1" type="primary">patA</name>
    <name type="ordered locus">STY3396</name>
    <name type="ordered locus">t3138</name>
</gene>
<proteinExistence type="inferred from homology"/>
<evidence type="ECO:0000255" key="1">
    <source>
        <dbReference type="HAMAP-Rule" id="MF_01276"/>
    </source>
</evidence>
<evidence type="ECO:0000305" key="2"/>
<feature type="chain" id="PRO_0000269735" description="Putrescine aminotransferase">
    <location>
        <begin position="1"/>
        <end position="459"/>
    </location>
</feature>
<feature type="binding site" description="in other chain" evidence="1">
    <location>
        <begin position="150"/>
        <end position="151"/>
    </location>
    <ligand>
        <name>pyridoxal 5'-phosphate</name>
        <dbReference type="ChEBI" id="CHEBI:597326"/>
        <note>ligand shared between dimeric partners</note>
    </ligand>
</feature>
<feature type="binding site" description="in other chain" evidence="1">
    <location>
        <position position="274"/>
    </location>
    <ligand>
        <name>pyridoxal 5'-phosphate</name>
        <dbReference type="ChEBI" id="CHEBI:597326"/>
        <note>ligand shared between dimeric partners</note>
    </ligand>
</feature>
<feature type="binding site" evidence="1">
    <location>
        <position position="332"/>
    </location>
    <ligand>
        <name>pyridoxal 5'-phosphate</name>
        <dbReference type="ChEBI" id="CHEBI:597326"/>
        <note>ligand shared between dimeric partners</note>
    </ligand>
</feature>
<feature type="modified residue" description="N6-(pyridoxal phosphate)lysine" evidence="1">
    <location>
        <position position="300"/>
    </location>
</feature>
<protein>
    <recommendedName>
        <fullName evidence="1">Putrescine aminotransferase</fullName>
        <shortName evidence="1">PAT</shortName>
        <shortName evidence="1">PATase</shortName>
        <ecNumber evidence="1">2.6.1.82</ecNumber>
    </recommendedName>
    <alternativeName>
        <fullName evidence="1">Cadaverine transaminase</fullName>
    </alternativeName>
    <alternativeName>
        <fullName evidence="1">Diamine transaminase</fullName>
        <ecNumber evidence="1">2.6.1.29</ecNumber>
    </alternativeName>
    <alternativeName>
        <fullName evidence="1">Putrescine transaminase</fullName>
    </alternativeName>
    <alternativeName>
        <fullName evidence="1">Putrescine--2-oxoglutaric acid transaminase</fullName>
    </alternativeName>
</protein>
<keyword id="KW-0032">Aminotransferase</keyword>
<keyword id="KW-0663">Pyridoxal phosphate</keyword>
<keyword id="KW-0808">Transferase</keyword>
<comment type="function">
    <text evidence="1">Catalyzes the aminotransferase reaction from putrescine to 2-oxoglutarate, leading to glutamate and 4-aminobutanal, which spontaneously cyclizes to form 1-pyrroline. This is the first step in one of two pathways for putrescine degradation, where putrescine is converted into 4-aminobutanoate (gamma-aminobutyrate or GABA) via 4-aminobutanal. Also functions as a cadaverine transaminase in a a L-lysine degradation pathway to succinate that proceeds via cadaverine, glutarate and L-2-hydroxyglutarate.</text>
</comment>
<comment type="catalytic activity">
    <reaction evidence="1">
        <text>an alkane-alpha,omega-diamine + 2-oxoglutarate = an omega-aminoaldehyde + L-glutamate</text>
        <dbReference type="Rhea" id="RHEA:18217"/>
        <dbReference type="Rhea" id="RHEA-COMP:9766"/>
        <dbReference type="Rhea" id="RHEA-COMP:12750"/>
        <dbReference type="ChEBI" id="CHEBI:16810"/>
        <dbReference type="ChEBI" id="CHEBI:29985"/>
        <dbReference type="ChEBI" id="CHEBI:70977"/>
        <dbReference type="ChEBI" id="CHEBI:133427"/>
        <dbReference type="EC" id="2.6.1.29"/>
    </reaction>
    <physiologicalReaction direction="left-to-right" evidence="1">
        <dbReference type="Rhea" id="RHEA:18218"/>
    </physiologicalReaction>
</comment>
<comment type="catalytic activity">
    <reaction evidence="1">
        <text>putrescine + 2-oxoglutarate = 1-pyrroline + L-glutamate + H2O</text>
        <dbReference type="Rhea" id="RHEA:12268"/>
        <dbReference type="ChEBI" id="CHEBI:15377"/>
        <dbReference type="ChEBI" id="CHEBI:16810"/>
        <dbReference type="ChEBI" id="CHEBI:29985"/>
        <dbReference type="ChEBI" id="CHEBI:36781"/>
        <dbReference type="ChEBI" id="CHEBI:326268"/>
        <dbReference type="EC" id="2.6.1.82"/>
    </reaction>
    <physiologicalReaction direction="left-to-right" evidence="1">
        <dbReference type="Rhea" id="RHEA:12269"/>
    </physiologicalReaction>
</comment>
<comment type="catalytic activity">
    <reaction evidence="1">
        <text>cadaverine + 2-oxoglutarate = 5-aminopentanal + L-glutamate</text>
        <dbReference type="Rhea" id="RHEA:61624"/>
        <dbReference type="ChEBI" id="CHEBI:16810"/>
        <dbReference type="ChEBI" id="CHEBI:29985"/>
        <dbReference type="ChEBI" id="CHEBI:58384"/>
        <dbReference type="ChEBI" id="CHEBI:144896"/>
    </reaction>
    <physiologicalReaction direction="left-to-right" evidence="1">
        <dbReference type="Rhea" id="RHEA:61625"/>
    </physiologicalReaction>
</comment>
<comment type="cofactor">
    <cofactor evidence="1">
        <name>pyridoxal 5'-phosphate</name>
        <dbReference type="ChEBI" id="CHEBI:597326"/>
    </cofactor>
</comment>
<comment type="pathway">
    <text evidence="1">Amine and polyamine degradation; putrescine degradation; 4-aminobutanal from putrescine (transaminase route): step 1/1.</text>
</comment>
<comment type="similarity">
    <text evidence="1">Belongs to the class-III pyridoxal-phosphate-dependent aminotransferase family. Putrescine aminotransferase subfamily.</text>
</comment>
<comment type="sequence caution" evidence="2">
    <conflict type="erroneous initiation">
        <sequence resource="EMBL-CDS" id="AAO70680"/>
    </conflict>
</comment>
<comment type="sequence caution" evidence="2">
    <conflict type="erroneous initiation">
        <sequence resource="EMBL-CDS" id="CAD07742"/>
    </conflict>
</comment>
<dbReference type="EC" id="2.6.1.82" evidence="1"/>
<dbReference type="EC" id="2.6.1.29" evidence="1"/>
<dbReference type="EMBL" id="AL513382">
    <property type="protein sequence ID" value="CAD07742.1"/>
    <property type="status" value="ALT_INIT"/>
    <property type="molecule type" value="Genomic_DNA"/>
</dbReference>
<dbReference type="EMBL" id="AE014613">
    <property type="protein sequence ID" value="AAO70680.1"/>
    <property type="status" value="ALT_INIT"/>
    <property type="molecule type" value="Genomic_DNA"/>
</dbReference>
<dbReference type="RefSeq" id="NP_457608.3">
    <property type="nucleotide sequence ID" value="NC_003198.1"/>
</dbReference>
<dbReference type="SMR" id="Q8Z3L9"/>
<dbReference type="STRING" id="220341.gene:17587252"/>
<dbReference type="KEGG" id="stt:t3138"/>
<dbReference type="KEGG" id="sty:STY3396"/>
<dbReference type="PATRIC" id="fig|220341.7.peg.3458"/>
<dbReference type="eggNOG" id="COG4992">
    <property type="taxonomic scope" value="Bacteria"/>
</dbReference>
<dbReference type="HOGENOM" id="CLU_016922_10_0_6"/>
<dbReference type="OMA" id="VCEGNFH"/>
<dbReference type="UniPathway" id="UPA00188">
    <property type="reaction ID" value="UER00290"/>
</dbReference>
<dbReference type="Proteomes" id="UP000000541">
    <property type="component" value="Chromosome"/>
</dbReference>
<dbReference type="Proteomes" id="UP000002670">
    <property type="component" value="Chromosome"/>
</dbReference>
<dbReference type="GO" id="GO:0019161">
    <property type="term" value="F:diamine transaminase activity"/>
    <property type="evidence" value="ECO:0007669"/>
    <property type="project" value="UniProtKB-EC"/>
</dbReference>
<dbReference type="GO" id="GO:0042802">
    <property type="term" value="F:identical protein binding"/>
    <property type="evidence" value="ECO:0007669"/>
    <property type="project" value="TreeGrafter"/>
</dbReference>
<dbReference type="GO" id="GO:0033094">
    <property type="term" value="F:putrescine--2-oxoglutarate transaminase activity"/>
    <property type="evidence" value="ECO:0007669"/>
    <property type="project" value="UniProtKB-UniRule"/>
</dbReference>
<dbReference type="GO" id="GO:0030170">
    <property type="term" value="F:pyridoxal phosphate binding"/>
    <property type="evidence" value="ECO:0007669"/>
    <property type="project" value="UniProtKB-UniRule"/>
</dbReference>
<dbReference type="GO" id="GO:0019477">
    <property type="term" value="P:L-lysine catabolic process"/>
    <property type="evidence" value="ECO:0007669"/>
    <property type="project" value="UniProtKB-UniRule"/>
</dbReference>
<dbReference type="GO" id="GO:0009447">
    <property type="term" value="P:putrescine catabolic process"/>
    <property type="evidence" value="ECO:0007669"/>
    <property type="project" value="UniProtKB-UniRule"/>
</dbReference>
<dbReference type="CDD" id="cd00610">
    <property type="entry name" value="OAT_like"/>
    <property type="match status" value="1"/>
</dbReference>
<dbReference type="FunFam" id="3.40.640.10:FF:000004">
    <property type="entry name" value="Acetylornithine aminotransferase"/>
    <property type="match status" value="1"/>
</dbReference>
<dbReference type="Gene3D" id="3.90.1150.10">
    <property type="entry name" value="Aspartate Aminotransferase, domain 1"/>
    <property type="match status" value="1"/>
</dbReference>
<dbReference type="Gene3D" id="3.40.640.10">
    <property type="entry name" value="Type I PLP-dependent aspartate aminotransferase-like (Major domain)"/>
    <property type="match status" value="1"/>
</dbReference>
<dbReference type="HAMAP" id="MF_01276">
    <property type="entry name" value="Putres_aminotrans_3"/>
    <property type="match status" value="1"/>
</dbReference>
<dbReference type="InterPro" id="IPR005814">
    <property type="entry name" value="Aminotrans_3"/>
</dbReference>
<dbReference type="InterPro" id="IPR049704">
    <property type="entry name" value="Aminotrans_3_PPA_site"/>
</dbReference>
<dbReference type="InterPro" id="IPR050103">
    <property type="entry name" value="Class-III_PLP-dep_AT"/>
</dbReference>
<dbReference type="InterPro" id="IPR017747">
    <property type="entry name" value="Putrescine_aminotransferase"/>
</dbReference>
<dbReference type="InterPro" id="IPR015424">
    <property type="entry name" value="PyrdxlP-dep_Trfase"/>
</dbReference>
<dbReference type="InterPro" id="IPR015421">
    <property type="entry name" value="PyrdxlP-dep_Trfase_major"/>
</dbReference>
<dbReference type="InterPro" id="IPR015422">
    <property type="entry name" value="PyrdxlP-dep_Trfase_small"/>
</dbReference>
<dbReference type="NCBIfam" id="NF008570">
    <property type="entry name" value="PRK11522.1"/>
    <property type="match status" value="1"/>
</dbReference>
<dbReference type="NCBIfam" id="TIGR03372">
    <property type="entry name" value="putres_am_tran"/>
    <property type="match status" value="1"/>
</dbReference>
<dbReference type="PANTHER" id="PTHR11986">
    <property type="entry name" value="AMINOTRANSFERASE CLASS III"/>
    <property type="match status" value="1"/>
</dbReference>
<dbReference type="PANTHER" id="PTHR11986:SF112">
    <property type="entry name" value="PUTRESCINE AMINOTRANSFERASE"/>
    <property type="match status" value="1"/>
</dbReference>
<dbReference type="Pfam" id="PF00202">
    <property type="entry name" value="Aminotran_3"/>
    <property type="match status" value="1"/>
</dbReference>
<dbReference type="PIRSF" id="PIRSF000521">
    <property type="entry name" value="Transaminase_4ab_Lys_Orn"/>
    <property type="match status" value="1"/>
</dbReference>
<dbReference type="SUPFAM" id="SSF53383">
    <property type="entry name" value="PLP-dependent transferases"/>
    <property type="match status" value="1"/>
</dbReference>
<dbReference type="PROSITE" id="PS00600">
    <property type="entry name" value="AA_TRANSFER_CLASS_3"/>
    <property type="match status" value="1"/>
</dbReference>
<organism>
    <name type="scientific">Salmonella typhi</name>
    <dbReference type="NCBI Taxonomy" id="90370"/>
    <lineage>
        <taxon>Bacteria</taxon>
        <taxon>Pseudomonadati</taxon>
        <taxon>Pseudomonadota</taxon>
        <taxon>Gammaproteobacteria</taxon>
        <taxon>Enterobacterales</taxon>
        <taxon>Enterobacteriaceae</taxon>
        <taxon>Salmonella</taxon>
    </lineage>
</organism>
<accession>Q8Z3L9</accession>
<accession>Q7C743</accession>